<name>RL32_SACI2</name>
<comment type="similarity">
    <text evidence="1">Belongs to the eukaryotic ribosomal protein eL32 family.</text>
</comment>
<feature type="chain" id="PRO_1000213012" description="Large ribosomal subunit protein eL32">
    <location>
        <begin position="1"/>
        <end position="138"/>
    </location>
</feature>
<protein>
    <recommendedName>
        <fullName evidence="1">Large ribosomal subunit protein eL32</fullName>
    </recommendedName>
    <alternativeName>
        <fullName evidence="2">50S ribosomal protein L32e</fullName>
    </alternativeName>
</protein>
<reference key="1">
    <citation type="journal article" date="2009" name="Proc. Natl. Acad. Sci. U.S.A.">
        <title>Biogeography of the Sulfolobus islandicus pan-genome.</title>
        <authorList>
            <person name="Reno M.L."/>
            <person name="Held N.L."/>
            <person name="Fields C.J."/>
            <person name="Burke P.V."/>
            <person name="Whitaker R.J."/>
        </authorList>
    </citation>
    <scope>NUCLEOTIDE SEQUENCE [LARGE SCALE GENOMIC DNA]</scope>
    <source>
        <strain>L.S.2.15 / Lassen #1</strain>
    </source>
</reference>
<organism>
    <name type="scientific">Saccharolobus islandicus (strain L.S.2.15 / Lassen #1)</name>
    <name type="common">Sulfolobus islandicus</name>
    <dbReference type="NCBI Taxonomy" id="429572"/>
    <lineage>
        <taxon>Archaea</taxon>
        <taxon>Thermoproteota</taxon>
        <taxon>Thermoprotei</taxon>
        <taxon>Sulfolobales</taxon>
        <taxon>Sulfolobaceae</taxon>
        <taxon>Saccharolobus</taxon>
    </lineage>
</organism>
<dbReference type="EMBL" id="CP001399">
    <property type="protein sequence ID" value="ACP35539.1"/>
    <property type="molecule type" value="Genomic_DNA"/>
</dbReference>
<dbReference type="RefSeq" id="WP_012711435.1">
    <property type="nucleotide sequence ID" value="NC_012589.1"/>
</dbReference>
<dbReference type="SMR" id="C3MQ76"/>
<dbReference type="KEGG" id="sis:LS215_1532"/>
<dbReference type="HOGENOM" id="CLU_071479_3_0_2"/>
<dbReference type="OrthoDB" id="372100at2157"/>
<dbReference type="Proteomes" id="UP000001747">
    <property type="component" value="Chromosome"/>
</dbReference>
<dbReference type="GO" id="GO:0022625">
    <property type="term" value="C:cytosolic large ribosomal subunit"/>
    <property type="evidence" value="ECO:0007669"/>
    <property type="project" value="TreeGrafter"/>
</dbReference>
<dbReference type="GO" id="GO:0003735">
    <property type="term" value="F:structural constituent of ribosome"/>
    <property type="evidence" value="ECO:0007669"/>
    <property type="project" value="InterPro"/>
</dbReference>
<dbReference type="GO" id="GO:0006412">
    <property type="term" value="P:translation"/>
    <property type="evidence" value="ECO:0007669"/>
    <property type="project" value="UniProtKB-UniRule"/>
</dbReference>
<dbReference type="CDD" id="cd00513">
    <property type="entry name" value="Ribosomal_L32_L32e"/>
    <property type="match status" value="1"/>
</dbReference>
<dbReference type="HAMAP" id="MF_00810">
    <property type="entry name" value="Ribosomal_eL32"/>
    <property type="match status" value="1"/>
</dbReference>
<dbReference type="InterPro" id="IPR001515">
    <property type="entry name" value="Ribosomal_eL32"/>
</dbReference>
<dbReference type="InterPro" id="IPR023654">
    <property type="entry name" value="Ribosomal_eL32_arc"/>
</dbReference>
<dbReference type="InterPro" id="IPR018263">
    <property type="entry name" value="Ribosomal_eL32_CS"/>
</dbReference>
<dbReference type="InterPro" id="IPR036351">
    <property type="entry name" value="Ribosomal_eL32_sf"/>
</dbReference>
<dbReference type="NCBIfam" id="NF006332">
    <property type="entry name" value="PRK08562.1"/>
    <property type="match status" value="1"/>
</dbReference>
<dbReference type="PANTHER" id="PTHR23413">
    <property type="entry name" value="60S RIBOSOMAL PROTEIN L32 AND DNA-DIRECTED RNA POLYMERASE II, SUBUNIT N"/>
    <property type="match status" value="1"/>
</dbReference>
<dbReference type="PANTHER" id="PTHR23413:SF1">
    <property type="entry name" value="RIBOSOMAL PROTEIN L32"/>
    <property type="match status" value="1"/>
</dbReference>
<dbReference type="Pfam" id="PF01655">
    <property type="entry name" value="Ribosomal_L32e"/>
    <property type="match status" value="1"/>
</dbReference>
<dbReference type="SMART" id="SM01393">
    <property type="entry name" value="Ribosomal_L32e"/>
    <property type="match status" value="1"/>
</dbReference>
<dbReference type="SUPFAM" id="SSF52042">
    <property type="entry name" value="Ribosomal protein L32e"/>
    <property type="match status" value="1"/>
</dbReference>
<dbReference type="PROSITE" id="PS00580">
    <property type="entry name" value="RIBOSOMAL_L32E"/>
    <property type="match status" value="1"/>
</dbReference>
<sequence>MTEEKIQSYRKKIYVIRQKLKAKKPRFLRYDSDKFFRLGRQEKWRRPYGRDNKTRLKVRGFPAIVSVGYRLPKEVRGFHPSGLRQVIVHNVNDLVKVQNQKDSVIVTIASSVGFKKRLEILNKARELGLKVSNEGVSA</sequence>
<proteinExistence type="inferred from homology"/>
<keyword id="KW-0687">Ribonucleoprotein</keyword>
<keyword id="KW-0689">Ribosomal protein</keyword>
<gene>
    <name evidence="1" type="primary">rpl32e</name>
    <name type="ordered locus">LS215_1532</name>
</gene>
<accession>C3MQ76</accession>
<evidence type="ECO:0000255" key="1">
    <source>
        <dbReference type="HAMAP-Rule" id="MF_00810"/>
    </source>
</evidence>
<evidence type="ECO:0000305" key="2"/>